<keyword id="KW-1003">Cell membrane</keyword>
<keyword id="KW-0406">Ion transport</keyword>
<keyword id="KW-0472">Membrane</keyword>
<keyword id="KW-0630">Potassium</keyword>
<keyword id="KW-0633">Potassium transport</keyword>
<keyword id="KW-0769">Symport</keyword>
<keyword id="KW-0812">Transmembrane</keyword>
<keyword id="KW-1133">Transmembrane helix</keyword>
<keyword id="KW-0813">Transport</keyword>
<organism>
    <name type="scientific">Streptococcus pyogenes serotype M3 (strain SSI-1)</name>
    <dbReference type="NCBI Taxonomy" id="193567"/>
    <lineage>
        <taxon>Bacteria</taxon>
        <taxon>Bacillati</taxon>
        <taxon>Bacillota</taxon>
        <taxon>Bacilli</taxon>
        <taxon>Lactobacillales</taxon>
        <taxon>Streptococcaceae</taxon>
        <taxon>Streptococcus</taxon>
    </lineage>
</organism>
<sequence>MSDSHLTAFDKASKAGFIIALGIVYGDIGTSPLYTMQSLVENQGGVNQVSESFILGSISLIIWTLTLITTIKYVLIALKADNHHEGGIFSLFTLVRKMSPWLIVPAMIGGATLLSDGALTPAVTVTSAIEGLKAVPGLSHIYQNQTNVIITTLVILIVLFGIQRFGTGFIGKIFGPVMFIWFSFLGVSGFFNMLGHLEIFKAINPYYALHLLFSPENHRGIFILGSIFLATTGAEALYSDLGHVGRGNIYVSWPFVKMCIVLSYCGQAAWILANKHSGIELNPFFASVPSQLRVYLVSLATLAAIIASQALISGSFTLVSEAMRLKIFPLFRVTYPGANLGQLYIPVINWILFAVTSCTVLAFRTSAHMEAAYGLAITITMLMTTILLKYYLIKKGTRPILAHLVMAFFALVEFIFFLASAIKFMHGGYAVVILALAIVFVMFIWHAGTRIVFKYVKSLNLNDYKEQIKQLRDDVCFDLYQTNVVYLSNRMQDHMIDRSILYSILDKRPKRAQVYWFVNVQVTDEPYTAKYKVDMMGTDYMVRVNLYLGFRMPQTVPRYLRTIVQDLMESGRLPKQEQEYTITPGRDVGDFRFVLIEERVSNARQLSNFERFIMQTKASIKHVTASPMRWFGLQYSEVTLEVVPLILSDILKLPIKELVPVEDSEA</sequence>
<name>KUP_STRPQ</name>
<gene>
    <name evidence="1" type="primary">kup</name>
    <name type="ordered locus">SPs0785</name>
</gene>
<protein>
    <recommendedName>
        <fullName evidence="1">Probable potassium transport system protein Kup</fullName>
    </recommendedName>
</protein>
<reference key="1">
    <citation type="journal article" date="2003" name="Genome Res.">
        <title>Genome sequence of an M3 strain of Streptococcus pyogenes reveals a large-scale genomic rearrangement in invasive strains and new insights into phage evolution.</title>
        <authorList>
            <person name="Nakagawa I."/>
            <person name="Kurokawa K."/>
            <person name="Yamashita A."/>
            <person name="Nakata M."/>
            <person name="Tomiyasu Y."/>
            <person name="Okahashi N."/>
            <person name="Kawabata S."/>
            <person name="Yamazaki K."/>
            <person name="Shiba T."/>
            <person name="Yasunaga T."/>
            <person name="Hayashi H."/>
            <person name="Hattori M."/>
            <person name="Hamada S."/>
        </authorList>
    </citation>
    <scope>NUCLEOTIDE SEQUENCE [LARGE SCALE GENOMIC DNA]</scope>
    <source>
        <strain>SSI-1</strain>
    </source>
</reference>
<feature type="chain" id="PRO_0000411366" description="Probable potassium transport system protein Kup">
    <location>
        <begin position="1"/>
        <end position="666"/>
    </location>
</feature>
<feature type="transmembrane region" description="Helical" evidence="1">
    <location>
        <begin position="16"/>
        <end position="36"/>
    </location>
</feature>
<feature type="transmembrane region" description="Helical" evidence="1">
    <location>
        <begin position="58"/>
        <end position="78"/>
    </location>
</feature>
<feature type="transmembrane region" description="Helical" evidence="1">
    <location>
        <begin position="100"/>
        <end position="120"/>
    </location>
</feature>
<feature type="transmembrane region" description="Helical" evidence="1">
    <location>
        <begin position="149"/>
        <end position="169"/>
    </location>
</feature>
<feature type="transmembrane region" description="Helical" evidence="1">
    <location>
        <begin position="173"/>
        <end position="193"/>
    </location>
</feature>
<feature type="transmembrane region" description="Helical" evidence="1">
    <location>
        <begin position="221"/>
        <end position="241"/>
    </location>
</feature>
<feature type="transmembrane region" description="Helical" evidence="1">
    <location>
        <begin position="253"/>
        <end position="273"/>
    </location>
</feature>
<feature type="transmembrane region" description="Helical" evidence="1">
    <location>
        <begin position="294"/>
        <end position="314"/>
    </location>
</feature>
<feature type="transmembrane region" description="Helical" evidence="1">
    <location>
        <begin position="343"/>
        <end position="363"/>
    </location>
</feature>
<feature type="transmembrane region" description="Helical" evidence="1">
    <location>
        <begin position="373"/>
        <end position="393"/>
    </location>
</feature>
<feature type="transmembrane region" description="Helical" evidence="1">
    <location>
        <begin position="399"/>
        <end position="419"/>
    </location>
</feature>
<feature type="transmembrane region" description="Helical" evidence="1">
    <location>
        <begin position="424"/>
        <end position="444"/>
    </location>
</feature>
<dbReference type="EMBL" id="BA000034">
    <property type="protein sequence ID" value="BAC63880.1"/>
    <property type="molecule type" value="Genomic_DNA"/>
</dbReference>
<dbReference type="RefSeq" id="WP_011054663.1">
    <property type="nucleotide sequence ID" value="NC_004606.1"/>
</dbReference>
<dbReference type="KEGG" id="sps:SPs0785"/>
<dbReference type="HOGENOM" id="CLU_008142_4_1_9"/>
<dbReference type="GO" id="GO:0005886">
    <property type="term" value="C:plasma membrane"/>
    <property type="evidence" value="ECO:0007669"/>
    <property type="project" value="UniProtKB-SubCell"/>
</dbReference>
<dbReference type="GO" id="GO:0015079">
    <property type="term" value="F:potassium ion transmembrane transporter activity"/>
    <property type="evidence" value="ECO:0007669"/>
    <property type="project" value="UniProtKB-UniRule"/>
</dbReference>
<dbReference type="GO" id="GO:0015293">
    <property type="term" value="F:symporter activity"/>
    <property type="evidence" value="ECO:0007669"/>
    <property type="project" value="UniProtKB-UniRule"/>
</dbReference>
<dbReference type="HAMAP" id="MF_01522">
    <property type="entry name" value="Kup"/>
    <property type="match status" value="1"/>
</dbReference>
<dbReference type="InterPro" id="IPR003855">
    <property type="entry name" value="K+_transporter"/>
</dbReference>
<dbReference type="InterPro" id="IPR053952">
    <property type="entry name" value="K_trans_C"/>
</dbReference>
<dbReference type="InterPro" id="IPR053951">
    <property type="entry name" value="K_trans_N"/>
</dbReference>
<dbReference type="InterPro" id="IPR023051">
    <property type="entry name" value="Kup"/>
</dbReference>
<dbReference type="PANTHER" id="PTHR30540:SF83">
    <property type="entry name" value="K+ POTASSIUM TRANSPORTER"/>
    <property type="match status" value="1"/>
</dbReference>
<dbReference type="PANTHER" id="PTHR30540">
    <property type="entry name" value="OSMOTIC STRESS POTASSIUM TRANSPORTER"/>
    <property type="match status" value="1"/>
</dbReference>
<dbReference type="Pfam" id="PF02705">
    <property type="entry name" value="K_trans"/>
    <property type="match status" value="1"/>
</dbReference>
<dbReference type="Pfam" id="PF22776">
    <property type="entry name" value="K_trans_C"/>
    <property type="match status" value="1"/>
</dbReference>
<proteinExistence type="inferred from homology"/>
<comment type="function">
    <text evidence="1">Transport of potassium into the cell. Likely operates as a K(+):H(+) symporter.</text>
</comment>
<comment type="catalytic activity">
    <reaction evidence="1">
        <text>K(+)(in) + H(+)(in) = K(+)(out) + H(+)(out)</text>
        <dbReference type="Rhea" id="RHEA:28490"/>
        <dbReference type="ChEBI" id="CHEBI:15378"/>
        <dbReference type="ChEBI" id="CHEBI:29103"/>
    </reaction>
    <physiologicalReaction direction="right-to-left" evidence="1">
        <dbReference type="Rhea" id="RHEA:28492"/>
    </physiologicalReaction>
</comment>
<comment type="subcellular location">
    <subcellularLocation>
        <location evidence="1">Cell membrane</location>
        <topology evidence="1">Multi-pass membrane protein</topology>
    </subcellularLocation>
</comment>
<comment type="similarity">
    <text evidence="1">Belongs to the HAK/KUP transporter (TC 2.A.72) family.</text>
</comment>
<evidence type="ECO:0000255" key="1">
    <source>
        <dbReference type="HAMAP-Rule" id="MF_01522"/>
    </source>
</evidence>
<accession>P0DB57</accession>
<accession>Q79XJ5</accession>
<accession>Q8K6Y2</accession>